<reference key="1">
    <citation type="journal article" date="2006" name="Anim. Genet.">
        <title>Full-length cDNA, molecular characterization and physical mapping of five genes from a porcine fetal cDNA library.</title>
        <authorList>
            <person name="Wang H.L."/>
            <person name="Wang H."/>
            <person name="Zhu Z.M."/>
            <person name="Wu X."/>
            <person name="Yu M."/>
            <person name="Zhao S.H."/>
            <person name="Yang S.L."/>
            <person name="Li K."/>
        </authorList>
    </citation>
    <scope>NUCLEOTIDE SEQUENCE [MRNA]</scope>
    <source>
        <tissue>Fetal skeletal muscle</tissue>
    </source>
</reference>
<reference key="2">
    <citation type="journal article" date="2004" name="Immunogenetics">
        <title>Nucleotide sequencing analysis of the swine 433-kb genomic segment located between the non-classical and classical SLA class I gene clusters.</title>
        <authorList>
            <person name="Shigenari A."/>
            <person name="Ando A."/>
            <person name="Renard C."/>
            <person name="Chardon P."/>
            <person name="Shiina T."/>
            <person name="Kulski J.K."/>
            <person name="Yasue H."/>
            <person name="Inoko H."/>
        </authorList>
    </citation>
    <scope>NUCLEOTIDE SEQUENCE [GENOMIC DNA]</scope>
    <source>
        <strain>Large white</strain>
    </source>
</reference>
<reference key="3">
    <citation type="journal article" date="1981" name="Biochemistry">
        <title>Kinetic analysis of guanosine 5'-triphosphate hydrolysis associated with tubulin polymerization.</title>
        <authorList>
            <person name="Carlier M.F."/>
            <person name="Pantaloni D."/>
        </authorList>
    </citation>
    <scope>FUNCTION</scope>
    <scope>SUBCELLULAR LOCATION</scope>
    <scope>SUBUNIT</scope>
</reference>
<dbReference type="EMBL" id="DQ225361">
    <property type="protein sequence ID" value="ABB58916.1"/>
    <property type="molecule type" value="mRNA"/>
</dbReference>
<dbReference type="EMBL" id="AB113356">
    <property type="protein sequence ID" value="BAD08435.1"/>
    <property type="molecule type" value="Genomic_DNA"/>
</dbReference>
<dbReference type="RefSeq" id="NP_001038077.1">
    <property type="nucleotide sequence ID" value="NM_001044612.1"/>
</dbReference>
<dbReference type="EMDB" id="EMD-7520"/>
<dbReference type="EMDB" id="EMD-7522"/>
<dbReference type="EMDB" id="EMD-7523"/>
<dbReference type="SMR" id="Q767L7"/>
<dbReference type="BioGRID" id="1151299">
    <property type="interactions" value="4"/>
</dbReference>
<dbReference type="FunCoup" id="Q767L7">
    <property type="interactions" value="1509"/>
</dbReference>
<dbReference type="STRING" id="9823.ENSSSCP00000014392"/>
<dbReference type="PaxDb" id="9823-ENSSSCP00000001459"/>
<dbReference type="PeptideAtlas" id="Q767L7"/>
<dbReference type="Ensembl" id="ENSSSCT00000001501.6">
    <property type="protein sequence ID" value="ENSSSCP00000001459.2"/>
    <property type="gene ID" value="ENSSSCG00000001379.6"/>
</dbReference>
<dbReference type="Ensembl" id="ENSSSCT00015031233.1">
    <property type="protein sequence ID" value="ENSSSCP00015012344.1"/>
    <property type="gene ID" value="ENSSSCG00015022877.1"/>
</dbReference>
<dbReference type="Ensembl" id="ENSSSCT00025108271.1">
    <property type="protein sequence ID" value="ENSSSCP00025049016.1"/>
    <property type="gene ID" value="ENSSSCG00025077784.1"/>
</dbReference>
<dbReference type="Ensembl" id="ENSSSCT00030084371.1">
    <property type="protein sequence ID" value="ENSSSCP00030038816.1"/>
    <property type="gene ID" value="ENSSSCG00030060370.1"/>
</dbReference>
<dbReference type="Ensembl" id="ENSSSCT00035080757.1">
    <property type="protein sequence ID" value="ENSSSCP00035033327.1"/>
    <property type="gene ID" value="ENSSSCG00035060189.1"/>
</dbReference>
<dbReference type="Ensembl" id="ENSSSCT00040092976.1">
    <property type="protein sequence ID" value="ENSSSCP00040041078.1"/>
    <property type="gene ID" value="ENSSSCG00040067819.1"/>
</dbReference>
<dbReference type="Ensembl" id="ENSSSCT00050027600.1">
    <property type="protein sequence ID" value="ENSSSCP00050011402.1"/>
    <property type="gene ID" value="ENSSSCG00050020383.1"/>
</dbReference>
<dbReference type="Ensembl" id="ENSSSCT00055060646.1">
    <property type="protein sequence ID" value="ENSSSCP00055048591.1"/>
    <property type="gene ID" value="ENSSSCG00055030461.1"/>
</dbReference>
<dbReference type="Ensembl" id="ENSSSCT00060064925.1">
    <property type="protein sequence ID" value="ENSSSCP00060027797.1"/>
    <property type="gene ID" value="ENSSSCG00060047808.1"/>
</dbReference>
<dbReference type="Ensembl" id="ENSSSCT00065070403.1">
    <property type="protein sequence ID" value="ENSSSCP00065030693.1"/>
    <property type="gene ID" value="ENSSSCG00065051381.1"/>
</dbReference>
<dbReference type="Ensembl" id="ENSSSCT00070049133.1">
    <property type="protein sequence ID" value="ENSSSCP00070041492.1"/>
    <property type="gene ID" value="ENSSSCG00070024618.1"/>
</dbReference>
<dbReference type="Ensembl" id="ENSSSCT00085022756">
    <property type="protein sequence ID" value="ENSSSCP00085015671"/>
    <property type="gene ID" value="ENSSSCG00085012121"/>
</dbReference>
<dbReference type="Ensembl" id="ENSSSCT00090030907">
    <property type="protein sequence ID" value="ENSSSCP00090019164"/>
    <property type="gene ID" value="ENSSSCG00090017520"/>
</dbReference>
<dbReference type="Ensembl" id="ENSSSCT00105043217">
    <property type="protein sequence ID" value="ENSSSCP00105030115"/>
    <property type="gene ID" value="ENSSSCG00105022683"/>
</dbReference>
<dbReference type="Ensembl" id="ENSSSCT00110040756">
    <property type="protein sequence ID" value="ENSSSCP00110028473"/>
    <property type="gene ID" value="ENSSSCG00110021068"/>
</dbReference>
<dbReference type="Ensembl" id="ENSSSCT00115021800">
    <property type="protein sequence ID" value="ENSSSCP00115020644"/>
    <property type="gene ID" value="ENSSSCG00115012568"/>
</dbReference>
<dbReference type="Ensembl" id="ENSSSCT00130039176">
    <property type="protein sequence ID" value="ENSSSCP00130027589"/>
    <property type="gene ID" value="ENSSSCG00130020182"/>
</dbReference>
<dbReference type="GeneID" id="733686"/>
<dbReference type="KEGG" id="ssc:733686"/>
<dbReference type="CTD" id="203068"/>
<dbReference type="VGNC" id="VGNC:94578">
    <property type="gene designation" value="TUBB"/>
</dbReference>
<dbReference type="eggNOG" id="KOG1375">
    <property type="taxonomic scope" value="Eukaryota"/>
</dbReference>
<dbReference type="GeneTree" id="ENSGT00940000154370"/>
<dbReference type="HOGENOM" id="CLU_015718_1_1_1"/>
<dbReference type="InParanoid" id="Q767L7"/>
<dbReference type="OMA" id="MANTTKY"/>
<dbReference type="OrthoDB" id="9820562at2759"/>
<dbReference type="TreeFam" id="TF300298"/>
<dbReference type="Reactome" id="R-SSC-2565942">
    <property type="pathway name" value="Regulation of PLK1 Activity at G2/M Transition"/>
</dbReference>
<dbReference type="Reactome" id="R-SSC-380259">
    <property type="pathway name" value="Loss of Nlp from mitotic centrosomes"/>
</dbReference>
<dbReference type="Reactome" id="R-SSC-380270">
    <property type="pathway name" value="Recruitment of mitotic centrosome proteins and complexes"/>
</dbReference>
<dbReference type="Reactome" id="R-SSC-380284">
    <property type="pathway name" value="Loss of proteins required for interphase microtubule organization from the centrosome"/>
</dbReference>
<dbReference type="Reactome" id="R-SSC-380320">
    <property type="pathway name" value="Recruitment of NuMA to mitotic centrosomes"/>
</dbReference>
<dbReference type="Reactome" id="R-SSC-5620912">
    <property type="pathway name" value="Anchoring of the basal body to the plasma membrane"/>
</dbReference>
<dbReference type="Reactome" id="R-SSC-6798695">
    <property type="pathway name" value="Neutrophil degranulation"/>
</dbReference>
<dbReference type="Reactome" id="R-SSC-8854518">
    <property type="pathway name" value="AURKA Activation by TPX2"/>
</dbReference>
<dbReference type="Proteomes" id="UP000008227">
    <property type="component" value="Chromosome 7"/>
</dbReference>
<dbReference type="Proteomes" id="UP000314985">
    <property type="component" value="Chromosome 7"/>
</dbReference>
<dbReference type="Proteomes" id="UP000694570">
    <property type="component" value="Unplaced"/>
</dbReference>
<dbReference type="Proteomes" id="UP000694571">
    <property type="component" value="Unplaced"/>
</dbReference>
<dbReference type="Proteomes" id="UP000694720">
    <property type="component" value="Unplaced"/>
</dbReference>
<dbReference type="Proteomes" id="UP000694722">
    <property type="component" value="Unplaced"/>
</dbReference>
<dbReference type="Proteomes" id="UP000694723">
    <property type="component" value="Unplaced"/>
</dbReference>
<dbReference type="Proteomes" id="UP000694724">
    <property type="component" value="Unplaced"/>
</dbReference>
<dbReference type="Proteomes" id="UP000694725">
    <property type="component" value="Unplaced"/>
</dbReference>
<dbReference type="Proteomes" id="UP000694726">
    <property type="component" value="Unplaced"/>
</dbReference>
<dbReference type="Proteomes" id="UP000694727">
    <property type="component" value="Unplaced"/>
</dbReference>
<dbReference type="Proteomes" id="UP000694728">
    <property type="component" value="Unplaced"/>
</dbReference>
<dbReference type="Bgee" id="ENSSSCG00000001379">
    <property type="expression patterns" value="Expressed in hindlimb bud and 41 other cell types or tissues"/>
</dbReference>
<dbReference type="ExpressionAtlas" id="Q767L7">
    <property type="expression patterns" value="baseline and differential"/>
</dbReference>
<dbReference type="GO" id="GO:0044297">
    <property type="term" value="C:cell body"/>
    <property type="evidence" value="ECO:0007669"/>
    <property type="project" value="Ensembl"/>
</dbReference>
<dbReference type="GO" id="GO:0005737">
    <property type="term" value="C:cytoplasm"/>
    <property type="evidence" value="ECO:0000318"/>
    <property type="project" value="GO_Central"/>
</dbReference>
<dbReference type="GO" id="GO:0036464">
    <property type="term" value="C:cytoplasmic ribonucleoprotein granule"/>
    <property type="evidence" value="ECO:0007669"/>
    <property type="project" value="Ensembl"/>
</dbReference>
<dbReference type="GO" id="GO:0045171">
    <property type="term" value="C:intercellular bridge"/>
    <property type="evidence" value="ECO:0007669"/>
    <property type="project" value="Ensembl"/>
</dbReference>
<dbReference type="GO" id="GO:0005874">
    <property type="term" value="C:microtubule"/>
    <property type="evidence" value="ECO:0000318"/>
    <property type="project" value="GO_Central"/>
</dbReference>
<dbReference type="GO" id="GO:0072686">
    <property type="term" value="C:mitotic spindle"/>
    <property type="evidence" value="ECO:0007669"/>
    <property type="project" value="Ensembl"/>
</dbReference>
<dbReference type="GO" id="GO:0005641">
    <property type="term" value="C:nuclear envelope lumen"/>
    <property type="evidence" value="ECO:0007669"/>
    <property type="project" value="Ensembl"/>
</dbReference>
<dbReference type="GO" id="GO:0005525">
    <property type="term" value="F:GTP binding"/>
    <property type="evidence" value="ECO:0000318"/>
    <property type="project" value="GO_Central"/>
</dbReference>
<dbReference type="GO" id="GO:0003924">
    <property type="term" value="F:GTPase activity"/>
    <property type="evidence" value="ECO:0007669"/>
    <property type="project" value="InterPro"/>
</dbReference>
<dbReference type="GO" id="GO:0046872">
    <property type="term" value="F:metal ion binding"/>
    <property type="evidence" value="ECO:0007669"/>
    <property type="project" value="UniProtKB-KW"/>
</dbReference>
<dbReference type="GO" id="GO:0042288">
    <property type="term" value="F:MHC class I protein binding"/>
    <property type="evidence" value="ECO:0007669"/>
    <property type="project" value="Ensembl"/>
</dbReference>
<dbReference type="GO" id="GO:0005200">
    <property type="term" value="F:structural constituent of cytoskeleton"/>
    <property type="evidence" value="ECO:0000318"/>
    <property type="project" value="GO_Central"/>
</dbReference>
<dbReference type="GO" id="GO:0031625">
    <property type="term" value="F:ubiquitin protein ligase binding"/>
    <property type="evidence" value="ECO:0007669"/>
    <property type="project" value="Ensembl"/>
</dbReference>
<dbReference type="GO" id="GO:0000226">
    <property type="term" value="P:microtubule cytoskeleton organization"/>
    <property type="evidence" value="ECO:0000318"/>
    <property type="project" value="GO_Central"/>
</dbReference>
<dbReference type="GO" id="GO:0000278">
    <property type="term" value="P:mitotic cell cycle"/>
    <property type="evidence" value="ECO:0000318"/>
    <property type="project" value="GO_Central"/>
</dbReference>
<dbReference type="GO" id="GO:0071895">
    <property type="term" value="P:odontoblast differentiation"/>
    <property type="evidence" value="ECO:0007669"/>
    <property type="project" value="Ensembl"/>
</dbReference>
<dbReference type="GO" id="GO:0050807">
    <property type="term" value="P:regulation of synapse organization"/>
    <property type="evidence" value="ECO:0007669"/>
    <property type="project" value="Ensembl"/>
</dbReference>
<dbReference type="GO" id="GO:0051225">
    <property type="term" value="P:spindle assembly"/>
    <property type="evidence" value="ECO:0007669"/>
    <property type="project" value="Ensembl"/>
</dbReference>
<dbReference type="CDD" id="cd02187">
    <property type="entry name" value="beta_tubulin"/>
    <property type="match status" value="1"/>
</dbReference>
<dbReference type="FunFam" id="1.10.287.600:FF:000002">
    <property type="entry name" value="Tubulin beta chain"/>
    <property type="match status" value="1"/>
</dbReference>
<dbReference type="FunFam" id="3.30.1330.20:FF:000002">
    <property type="entry name" value="Tubulin beta chain"/>
    <property type="match status" value="1"/>
</dbReference>
<dbReference type="FunFam" id="3.40.50.1440:FF:000003">
    <property type="entry name" value="Tubulin beta chain"/>
    <property type="match status" value="1"/>
</dbReference>
<dbReference type="Gene3D" id="1.10.287.600">
    <property type="entry name" value="Helix hairpin bin"/>
    <property type="match status" value="1"/>
</dbReference>
<dbReference type="Gene3D" id="3.30.1330.20">
    <property type="entry name" value="Tubulin/FtsZ, C-terminal domain"/>
    <property type="match status" value="1"/>
</dbReference>
<dbReference type="Gene3D" id="3.40.50.1440">
    <property type="entry name" value="Tubulin/FtsZ, GTPase domain"/>
    <property type="match status" value="1"/>
</dbReference>
<dbReference type="InterPro" id="IPR013838">
    <property type="entry name" value="Beta-tubulin_BS"/>
</dbReference>
<dbReference type="InterPro" id="IPR002453">
    <property type="entry name" value="Beta_tubulin"/>
</dbReference>
<dbReference type="InterPro" id="IPR008280">
    <property type="entry name" value="Tub_FtsZ_C"/>
</dbReference>
<dbReference type="InterPro" id="IPR000217">
    <property type="entry name" value="Tubulin"/>
</dbReference>
<dbReference type="InterPro" id="IPR037103">
    <property type="entry name" value="Tubulin/FtsZ-like_C"/>
</dbReference>
<dbReference type="InterPro" id="IPR018316">
    <property type="entry name" value="Tubulin/FtsZ_2-layer-sand-dom"/>
</dbReference>
<dbReference type="InterPro" id="IPR036525">
    <property type="entry name" value="Tubulin/FtsZ_GTPase_sf"/>
</dbReference>
<dbReference type="InterPro" id="IPR023123">
    <property type="entry name" value="Tubulin_C"/>
</dbReference>
<dbReference type="InterPro" id="IPR017975">
    <property type="entry name" value="Tubulin_CS"/>
</dbReference>
<dbReference type="InterPro" id="IPR003008">
    <property type="entry name" value="Tubulin_FtsZ_GTPase"/>
</dbReference>
<dbReference type="PANTHER" id="PTHR11588">
    <property type="entry name" value="TUBULIN"/>
    <property type="match status" value="1"/>
</dbReference>
<dbReference type="Pfam" id="PF00091">
    <property type="entry name" value="Tubulin"/>
    <property type="match status" value="1"/>
</dbReference>
<dbReference type="Pfam" id="PF03953">
    <property type="entry name" value="Tubulin_C"/>
    <property type="match status" value="1"/>
</dbReference>
<dbReference type="PRINTS" id="PR01163">
    <property type="entry name" value="BETATUBULIN"/>
</dbReference>
<dbReference type="PRINTS" id="PR01161">
    <property type="entry name" value="TUBULIN"/>
</dbReference>
<dbReference type="SMART" id="SM00864">
    <property type="entry name" value="Tubulin"/>
    <property type="match status" value="1"/>
</dbReference>
<dbReference type="SMART" id="SM00865">
    <property type="entry name" value="Tubulin_C"/>
    <property type="match status" value="1"/>
</dbReference>
<dbReference type="SUPFAM" id="SSF55307">
    <property type="entry name" value="Tubulin C-terminal domain-like"/>
    <property type="match status" value="1"/>
</dbReference>
<dbReference type="SUPFAM" id="SSF52490">
    <property type="entry name" value="Tubulin nucleotide-binding domain-like"/>
    <property type="match status" value="1"/>
</dbReference>
<dbReference type="PROSITE" id="PS00227">
    <property type="entry name" value="TUBULIN"/>
    <property type="match status" value="1"/>
</dbReference>
<dbReference type="PROSITE" id="PS00228">
    <property type="entry name" value="TUBULIN_B_AUTOREG"/>
    <property type="match status" value="1"/>
</dbReference>
<proteinExistence type="evidence at protein level"/>
<keyword id="KW-0007">Acetylation</keyword>
<keyword id="KW-0963">Cytoplasm</keyword>
<keyword id="KW-0206">Cytoskeleton</keyword>
<keyword id="KW-0342">GTP-binding</keyword>
<keyword id="KW-1017">Isopeptide bond</keyword>
<keyword id="KW-0460">Magnesium</keyword>
<keyword id="KW-0479">Metal-binding</keyword>
<keyword id="KW-0488">Methylation</keyword>
<keyword id="KW-0493">Microtubule</keyword>
<keyword id="KW-0547">Nucleotide-binding</keyword>
<keyword id="KW-0597">Phosphoprotein</keyword>
<keyword id="KW-1185">Reference proteome</keyword>
<keyword id="KW-0832">Ubl conjugation</keyword>
<name>TBB5_PIG</name>
<feature type="chain" id="PRO_0000297530" description="Tubulin beta chain">
    <location>
        <begin position="1"/>
        <end position="444"/>
    </location>
</feature>
<feature type="region of interest" description="Disordered" evidence="8">
    <location>
        <begin position="423"/>
        <end position="444"/>
    </location>
</feature>
<feature type="short sequence motif" description="MREI motif" evidence="1">
    <location>
        <begin position="1"/>
        <end position="4"/>
    </location>
</feature>
<feature type="compositionally biased region" description="Acidic residues" evidence="8">
    <location>
        <begin position="429"/>
        <end position="444"/>
    </location>
</feature>
<feature type="binding site" evidence="5">
    <location>
        <position position="11"/>
    </location>
    <ligand>
        <name>GTP</name>
        <dbReference type="ChEBI" id="CHEBI:37565"/>
    </ligand>
</feature>
<feature type="binding site" evidence="2">
    <location>
        <position position="69"/>
    </location>
    <ligand>
        <name>GTP</name>
        <dbReference type="ChEBI" id="CHEBI:37565"/>
    </ligand>
</feature>
<feature type="binding site" evidence="2">
    <location>
        <position position="69"/>
    </location>
    <ligand>
        <name>Mg(2+)</name>
        <dbReference type="ChEBI" id="CHEBI:18420"/>
    </ligand>
</feature>
<feature type="binding site" evidence="5">
    <location>
        <position position="138"/>
    </location>
    <ligand>
        <name>GTP</name>
        <dbReference type="ChEBI" id="CHEBI:37565"/>
    </ligand>
</feature>
<feature type="binding site" evidence="5">
    <location>
        <position position="142"/>
    </location>
    <ligand>
        <name>GTP</name>
        <dbReference type="ChEBI" id="CHEBI:37565"/>
    </ligand>
</feature>
<feature type="binding site" evidence="5">
    <location>
        <position position="143"/>
    </location>
    <ligand>
        <name>GTP</name>
        <dbReference type="ChEBI" id="CHEBI:37565"/>
    </ligand>
</feature>
<feature type="binding site" evidence="5">
    <location>
        <position position="144"/>
    </location>
    <ligand>
        <name>GTP</name>
        <dbReference type="ChEBI" id="CHEBI:37565"/>
    </ligand>
</feature>
<feature type="binding site" evidence="5">
    <location>
        <position position="204"/>
    </location>
    <ligand>
        <name>GTP</name>
        <dbReference type="ChEBI" id="CHEBI:37565"/>
    </ligand>
</feature>
<feature type="binding site" evidence="5">
    <location>
        <position position="226"/>
    </location>
    <ligand>
        <name>GTP</name>
        <dbReference type="ChEBI" id="CHEBI:37565"/>
    </ligand>
</feature>
<feature type="modified residue" description="Phosphoserine" evidence="4">
    <location>
        <position position="40"/>
    </location>
</feature>
<feature type="modified residue" description="Phosphothreonine" evidence="1">
    <location>
        <position position="55"/>
    </location>
</feature>
<feature type="modified residue" description="N6-acetyllysine; alternate" evidence="1">
    <location>
        <position position="58"/>
    </location>
</feature>
<feature type="modified residue" description="N6-succinyllysine; alternate" evidence="4">
    <location>
        <position position="58"/>
    </location>
</feature>
<feature type="modified residue" description="Phosphoserine; by CDK1" evidence="1">
    <location>
        <position position="172"/>
    </location>
</feature>
<feature type="modified residue" description="Phosphothreonine" evidence="1">
    <location>
        <position position="285"/>
    </location>
</feature>
<feature type="modified residue" description="Phosphothreonine" evidence="1">
    <location>
        <position position="290"/>
    </location>
</feature>
<feature type="modified residue" description="Omega-N-methylarginine" evidence="1">
    <location>
        <position position="318"/>
    </location>
</feature>
<feature type="modified residue" description="5-glutamyl polyglutamate" evidence="1">
    <location>
        <position position="434"/>
    </location>
</feature>
<feature type="modified residue" description="5-glutamyl glycine" evidence="1">
    <location>
        <position position="438"/>
    </location>
</feature>
<feature type="modified residue" description="5-glutamyl polyglutamate" evidence="6">
    <location>
        <position position="438"/>
    </location>
</feature>
<feature type="modified residue" description="5-glutamyl glycine" evidence="1">
    <location>
        <position position="439"/>
    </location>
</feature>
<feature type="modified residue" description="5-glutamyl polyglutamate" evidence="1">
    <location>
        <position position="439"/>
    </location>
</feature>
<feature type="modified residue" description="5-glutamyl glycine" evidence="1">
    <location>
        <position position="441"/>
    </location>
</feature>
<feature type="modified residue" description="5-glutamyl polyglutamate" evidence="1">
    <location>
        <position position="441"/>
    </location>
</feature>
<feature type="modified residue" description="5-glutamyl glycine" evidence="1">
    <location>
        <position position="442"/>
    </location>
</feature>
<feature type="modified residue" description="5-glutamyl glycine" evidence="1">
    <location>
        <position position="443"/>
    </location>
</feature>
<feature type="cross-link" description="Glycyl lysine isopeptide (Lys-Gly) (interchain with G-Cter in ubiquitin); alternate" evidence="1">
    <location>
        <position position="58"/>
    </location>
</feature>
<feature type="cross-link" description="Glycyl lysine isopeptide (Lys-Gly) (interchain with G-Cter in ubiquitin)" evidence="1">
    <location>
        <position position="324"/>
    </location>
</feature>
<organism>
    <name type="scientific">Sus scrofa</name>
    <name type="common">Pig</name>
    <dbReference type="NCBI Taxonomy" id="9823"/>
    <lineage>
        <taxon>Eukaryota</taxon>
        <taxon>Metazoa</taxon>
        <taxon>Chordata</taxon>
        <taxon>Craniata</taxon>
        <taxon>Vertebrata</taxon>
        <taxon>Euteleostomi</taxon>
        <taxon>Mammalia</taxon>
        <taxon>Eutheria</taxon>
        <taxon>Laurasiatheria</taxon>
        <taxon>Artiodactyla</taxon>
        <taxon>Suina</taxon>
        <taxon>Suidae</taxon>
        <taxon>Sus</taxon>
    </lineage>
</organism>
<accession>Q767L7</accession>
<sequence>MREIVHIQAGQCGNQIGAKFWEVISDEHGIDPTGTYHGDSDLQLDRISVYYNEATGGKYVPRAILVDLEPGTMDSVRSGPFGQIFRPDNFVFGQSGAGNNWAKGHYTEGAELVDSVLDVVRKEAESCDCLQGFQLTHSLGGGTGSGMGTLLISKIREEYPDRIMNTFSVVPSPKVSDTVVEPYNATLSVHQLVENTDETYCIDNEALYDICFRTLKLTTPTYGDLNHLVSATMSGVTTCLRFPGQLNADLRKLAVNMVPFPRLHFFMPGFAPLTSRGSQQYRALTVPELTQQVFDAKNMMAACDPRHGRYLTVAAVFRGRMSMKEVDEQMLNVQNKNSSYFVEWIPNNVKTAVCDIPPRGLKMAVTFIGNSTAIQELFKRISEQFTAMFRRKAFLHWYTGEGMDEMEFTEAESNMNDLVSEYQQYQDATAEEEEDFGEEAEEEA</sequence>
<protein>
    <recommendedName>
        <fullName>Tubulin beta chain</fullName>
    </recommendedName>
    <alternativeName>
        <fullName>Tubulin beta-5 chain</fullName>
    </alternativeName>
</protein>
<evidence type="ECO:0000250" key="1">
    <source>
        <dbReference type="UniProtKB" id="P07437"/>
    </source>
</evidence>
<evidence type="ECO:0000250" key="2">
    <source>
        <dbReference type="UniProtKB" id="P68363"/>
    </source>
</evidence>
<evidence type="ECO:0000250" key="3">
    <source>
        <dbReference type="UniProtKB" id="P69893"/>
    </source>
</evidence>
<evidence type="ECO:0000250" key="4">
    <source>
        <dbReference type="UniProtKB" id="P99024"/>
    </source>
</evidence>
<evidence type="ECO:0000250" key="5">
    <source>
        <dbReference type="UniProtKB" id="Q13509"/>
    </source>
</evidence>
<evidence type="ECO:0000250" key="6">
    <source>
        <dbReference type="UniProtKB" id="Q2T9S0"/>
    </source>
</evidence>
<evidence type="ECO:0000250" key="7">
    <source>
        <dbReference type="UniProtKB" id="Q71U36"/>
    </source>
</evidence>
<evidence type="ECO:0000256" key="8">
    <source>
        <dbReference type="SAM" id="MobiDB-lite"/>
    </source>
</evidence>
<evidence type="ECO:0000269" key="9">
    <source>
    </source>
</evidence>
<evidence type="ECO:0000305" key="10"/>
<gene>
    <name type="primary">TUBB</name>
    <name type="synonym">TUBB5</name>
</gene>
<comment type="function">
    <text evidence="9">Tubulin is the major constituent of microtubules, a cylinder consisting of laterally associated linear protofilaments composed of alpha- and beta-tubulin heterodimers (PubMed:7225365). Microtubules grow by the addition of GTP-tubulin dimers to the microtubule end, where a stabilizing cap forms (PubMed:7225365). Below the cap, tubulin dimers are in GDP-bound state, owing to GTPase activity of alpha-tubulin (PubMed:7225365).</text>
</comment>
<comment type="cofactor">
    <cofactor evidence="2">
        <name>Mg(2+)</name>
        <dbReference type="ChEBI" id="CHEBI:18420"/>
    </cofactor>
</comment>
<comment type="subunit">
    <text evidence="1 3 4 9">Heterodimer of alpha and beta chains (PubMed:7225365). A typical microtubule is a hollow water-filled tube with an outer diameter of 25 nm and an inner diameter of 15 nM. Alpha-beta heterodimers associate head-to-tail to form protofilaments running lengthwise along the microtubule wall with the beta-tubulin subunit facing the microtubule plus end conferring a structural polarity. Microtubules usually have 13 protofilaments but different protofilament numbers can be found in some organisms and specialized cells. Interacts with CIMAP3. Interacts with DIAPH1 (By similarity). Interacts with MX1 (By similarity). May interact with RNABP10 (By similarity). Interacts with CFAP157 (By similarity). Nascent tubulin polypeptide interacts (via beta-tubulin MREI motif) with TTC5/STRAP; this interaction results in tubulin mRNA-targeted degradation (By similarity).</text>
</comment>
<comment type="subcellular location">
    <subcellularLocation>
        <location evidence="9">Cytoplasm</location>
        <location evidence="9">Cytoskeleton</location>
    </subcellularLocation>
</comment>
<comment type="domain">
    <text evidence="1">The MREI motif is common among all beta-tubulin isoforms and may be critical for tubulin autoregulation.</text>
</comment>
<comment type="PTM">
    <text evidence="4">Some glutamate residues at the C-terminus are polyglycylated, resulting in polyglycine chains on the gamma-carboxyl group. Glycylation is mainly limited to tubulin incorporated into axonemes (cilia and flagella) whereas glutamylation is prevalent in neuronal cells, centrioles, axonemes, and the mitotic spindle. Both modifications can coexist on the same protein on adjacent residues, and lowering polyglycylation levels increases polyglutamylation, and reciprocally. Cilia and flagella glycylation is required for their stability and maintenance. Flagella glycylation controls sperm motility.</text>
</comment>
<comment type="PTM">
    <text evidence="4 7">Some glutamate residues at the C-terminus are polyglutamylated, resulting in polyglutamate chains on the gamma-carboxyl group (By similarity). Polyglutamylation plays a key role in microtubule severing by spastin (SPAST). SPAST preferentially recognizes and acts on microtubules decorated with short polyglutamate tails: severing activity by SPAST increases as the number of glutamates per tubulin rises from one to eight, but decreases beyond this glutamylation threshold (By similarity). Glutamylation is also involved in cilia motility (By similarity).</text>
</comment>
<comment type="PTM">
    <text evidence="1">Phosphorylated on Ser-172 by CDK1 during the cell cycle, from metaphase to telophase, but not in interphase. This phosphorylation inhibits tubulin incorporation into microtubules.</text>
</comment>
<comment type="similarity">
    <text evidence="10">Belongs to the tubulin family.</text>
</comment>